<keyword id="KW-0227">DNA damage</keyword>
<keyword id="KW-0233">DNA recombination</keyword>
<keyword id="KW-0234">DNA repair</keyword>
<keyword id="KW-1185">Reference proteome</keyword>
<protein>
    <recommendedName>
        <fullName evidence="1">DNA repair protein RecO</fullName>
    </recommendedName>
    <alternativeName>
        <fullName evidence="1">Recombination protein O</fullName>
    </alternativeName>
</protein>
<feature type="chain" id="PRO_0000205017" description="DNA repair protein RecO">
    <location>
        <begin position="1"/>
        <end position="253"/>
    </location>
</feature>
<reference key="1">
    <citation type="journal article" date="2004" name="Nucleic Acids Res.">
        <title>Genome sequence of Symbiobacterium thermophilum, an uncultivable bacterium that depends on microbial commensalism.</title>
        <authorList>
            <person name="Ueda K."/>
            <person name="Yamashita A."/>
            <person name="Ishikawa J."/>
            <person name="Shimada M."/>
            <person name="Watsuji T."/>
            <person name="Morimura K."/>
            <person name="Ikeda H."/>
            <person name="Hattori M."/>
            <person name="Beppu T."/>
        </authorList>
    </citation>
    <scope>NUCLEOTIDE SEQUENCE [LARGE SCALE GENOMIC DNA]</scope>
    <source>
        <strain>DSM 24528 / JCM 14929 / IAM 14863 / T</strain>
    </source>
</reference>
<name>RECO_SYMTH</name>
<accession>Q67RZ0</accession>
<evidence type="ECO:0000255" key="1">
    <source>
        <dbReference type="HAMAP-Rule" id="MF_00201"/>
    </source>
</evidence>
<organism>
    <name type="scientific">Symbiobacterium thermophilum (strain DSM 24528 / JCM 14929 / IAM 14863 / T)</name>
    <dbReference type="NCBI Taxonomy" id="292459"/>
    <lineage>
        <taxon>Bacteria</taxon>
        <taxon>Bacillati</taxon>
        <taxon>Bacillota</taxon>
        <taxon>Clostridia</taxon>
        <taxon>Eubacteriales</taxon>
        <taxon>Symbiobacteriaceae</taxon>
        <taxon>Symbiobacterium</taxon>
    </lineage>
</organism>
<dbReference type="EMBL" id="AP006840">
    <property type="protein sequence ID" value="BAD39553.1"/>
    <property type="molecule type" value="Genomic_DNA"/>
</dbReference>
<dbReference type="RefSeq" id="WP_011194702.1">
    <property type="nucleotide sequence ID" value="NC_006177.1"/>
</dbReference>
<dbReference type="SMR" id="Q67RZ0"/>
<dbReference type="STRING" id="292459.STH568"/>
<dbReference type="KEGG" id="sth:STH568"/>
<dbReference type="eggNOG" id="COG1381">
    <property type="taxonomic scope" value="Bacteria"/>
</dbReference>
<dbReference type="HOGENOM" id="CLU_066632_3_0_9"/>
<dbReference type="OrthoDB" id="9797083at2"/>
<dbReference type="Proteomes" id="UP000000417">
    <property type="component" value="Chromosome"/>
</dbReference>
<dbReference type="GO" id="GO:0043590">
    <property type="term" value="C:bacterial nucleoid"/>
    <property type="evidence" value="ECO:0007669"/>
    <property type="project" value="TreeGrafter"/>
</dbReference>
<dbReference type="GO" id="GO:0006310">
    <property type="term" value="P:DNA recombination"/>
    <property type="evidence" value="ECO:0007669"/>
    <property type="project" value="UniProtKB-UniRule"/>
</dbReference>
<dbReference type="GO" id="GO:0006302">
    <property type="term" value="P:double-strand break repair"/>
    <property type="evidence" value="ECO:0007669"/>
    <property type="project" value="TreeGrafter"/>
</dbReference>
<dbReference type="Gene3D" id="2.40.50.140">
    <property type="entry name" value="Nucleic acid-binding proteins"/>
    <property type="match status" value="1"/>
</dbReference>
<dbReference type="Gene3D" id="1.20.1440.120">
    <property type="entry name" value="Recombination protein O, C-terminal domain"/>
    <property type="match status" value="1"/>
</dbReference>
<dbReference type="HAMAP" id="MF_00201">
    <property type="entry name" value="RecO"/>
    <property type="match status" value="1"/>
</dbReference>
<dbReference type="InterPro" id="IPR037278">
    <property type="entry name" value="ARFGAP/RecO"/>
</dbReference>
<dbReference type="InterPro" id="IPR022572">
    <property type="entry name" value="DNA_rep/recomb_RecO_N"/>
</dbReference>
<dbReference type="InterPro" id="IPR012340">
    <property type="entry name" value="NA-bd_OB-fold"/>
</dbReference>
<dbReference type="InterPro" id="IPR003717">
    <property type="entry name" value="RecO"/>
</dbReference>
<dbReference type="InterPro" id="IPR042242">
    <property type="entry name" value="RecO_C"/>
</dbReference>
<dbReference type="NCBIfam" id="TIGR00613">
    <property type="entry name" value="reco"/>
    <property type="match status" value="1"/>
</dbReference>
<dbReference type="PANTHER" id="PTHR33991">
    <property type="entry name" value="DNA REPAIR PROTEIN RECO"/>
    <property type="match status" value="1"/>
</dbReference>
<dbReference type="PANTHER" id="PTHR33991:SF1">
    <property type="entry name" value="DNA REPAIR PROTEIN RECO"/>
    <property type="match status" value="1"/>
</dbReference>
<dbReference type="Pfam" id="PF02565">
    <property type="entry name" value="RecO_C"/>
    <property type="match status" value="1"/>
</dbReference>
<dbReference type="Pfam" id="PF11967">
    <property type="entry name" value="RecO_N"/>
    <property type="match status" value="1"/>
</dbReference>
<dbReference type="SUPFAM" id="SSF57863">
    <property type="entry name" value="ArfGap/RecO-like zinc finger"/>
    <property type="match status" value="1"/>
</dbReference>
<dbReference type="SUPFAM" id="SSF50249">
    <property type="entry name" value="Nucleic acid-binding proteins"/>
    <property type="match status" value="1"/>
</dbReference>
<sequence length="253" mass="28265">MALYNVDGIVIRVRNFQDADKIVVLLTREEGKVEAVARGARRPRNRFAAATQLFSHVRAQLFSGRSLDTLSQVEIVESFRQLREDLVRMAYATYACELVDALLPERQRQEAPYLLLLTSLHLWGEPDRDPEPLLRAFELKLLSMLGFRPSLAACVGCGSEAVQQNGGVRFAPVLGGVLCPQCTDEGEGALRLSLGALETMKRLLDGDIRRAHMVRLSGELAAEIDRALSAYILARTERRLKSKEFLDTLRSAR</sequence>
<gene>
    <name evidence="1" type="primary">recO</name>
    <name type="ordered locus">STH568</name>
</gene>
<comment type="function">
    <text evidence="1">Involved in DNA repair and RecF pathway recombination.</text>
</comment>
<comment type="similarity">
    <text evidence="1">Belongs to the RecO family.</text>
</comment>
<proteinExistence type="inferred from homology"/>